<evidence type="ECO:0000255" key="1"/>
<evidence type="ECO:0000269" key="2">
    <source>
    </source>
</evidence>
<evidence type="ECO:0000269" key="3">
    <source>
    </source>
</evidence>
<evidence type="ECO:0000303" key="4">
    <source>
    </source>
</evidence>
<evidence type="ECO:0000303" key="5">
    <source>
    </source>
</evidence>
<evidence type="ECO:0000305" key="6"/>
<evidence type="ECO:0000312" key="7">
    <source>
        <dbReference type="EMBL" id="EPT26282.1"/>
    </source>
</evidence>
<evidence type="ECO:0000312" key="8">
    <source>
        <dbReference type="Proteomes" id="UP000001529"/>
    </source>
</evidence>
<organism evidence="8">
    <name type="scientific">Toxoplasma gondii (strain ATCC 50611 / Me49)</name>
    <dbReference type="NCBI Taxonomy" id="508771"/>
    <lineage>
        <taxon>Eukaryota</taxon>
        <taxon>Sar</taxon>
        <taxon>Alveolata</taxon>
        <taxon>Apicomplexa</taxon>
        <taxon>Conoidasida</taxon>
        <taxon>Coccidia</taxon>
        <taxon>Eucoccidiorida</taxon>
        <taxon>Eimeriorina</taxon>
        <taxon>Sarcocystidae</taxon>
        <taxon>Toxoplasma</taxon>
    </lineage>
</organism>
<sequence length="608" mass="69947">MAAPGLPQPGSLSTLAGYPSSTYSSQNSPFFPSADRGGRMTLEEIKRDFTKHKLECPDTMWREPQPEQVQGLYSFAIESIFGLTVNDVRIEEVTGDVRSCLPSIDSLQFLSQDGRLHAKAIGNLRFIRLCQRLNRVLGLPEFSRETFASPTASGVQRFASAVCMLLRLRESLCRQFESQIQQRASLQQSLQKLSQNAQLVEQELLRFRAERQTQQPLAQRQKQQQSELEEELRQRHSELGALMEEFKERQAVHGRLELELGDLVLELMNLKQEREELHDQVVHSPEKLMERRDELRVQQKHLDAQLQELENLAASQQKLLLAFAKAVKKAKKAMEILSAHRDQVLAPHLGFRSDMRTREKLFRELGEQKEQLSKAVQDLQAEREELARQLEDQERKKDEEETELRGHLARAKREVEERKKALADQQDMTAAFLREAEKLEEKLAEQKQRHKLLVDAIEEEIQKVYAAFLTYVSQMQFIRSQMPLSLDLSQSASFLAEHSEKTHRGSPLACEREENDDFLASLLAESSPSSLGEEKENLPQSRPTAAADAERRLADFSPEKGRKRLSCLDEETEEEARMHERERESDRLFPAAREPREDGDFPMYGHAE</sequence>
<feature type="chain" id="PRO_0000462296" description="Kinetochore protein NUF2">
    <location>
        <begin position="1"/>
        <end position="608"/>
    </location>
</feature>
<feature type="region of interest" description="Required for nuclear localization and function" evidence="2">
    <location>
        <begin position="121"/>
        <end position="125"/>
    </location>
</feature>
<feature type="coiled-coil region" evidence="1">
    <location>
        <begin position="176"/>
        <end position="319"/>
    </location>
</feature>
<feature type="coiled-coil region" evidence="1">
    <location>
        <begin position="358"/>
        <end position="460"/>
    </location>
</feature>
<feature type="mutagenesis site" description="Results in inability of the protein to complement conditional knockdown. Causes protein mislocalization from the nucleus to the cytoplasm." evidence="2">
    <original>IGNLR</original>
    <variation>AAAAA</variation>
    <location>
        <begin position="121"/>
        <end position="125"/>
    </location>
</feature>
<feature type="mutagenesis site" description="Results in inability of the protein to complement conditional knockdown. Causes protein mislocalization from the nucleus to the cytoplasm." evidence="2">
    <location>
        <begin position="121"/>
        <end position="125"/>
    </location>
</feature>
<dbReference type="EMBL" id="KE138837">
    <property type="protein sequence ID" value="EPT26282.1"/>
    <property type="molecule type" value="Genomic_DNA"/>
</dbReference>
<dbReference type="RefSeq" id="XP_018635615.1">
    <property type="nucleotide sequence ID" value="XM_018782578.1"/>
</dbReference>
<dbReference type="EnsemblProtists" id="TGME49_309380-t26_1">
    <property type="protein sequence ID" value="TGME49_309380-t26_1"/>
    <property type="gene ID" value="TGME49_309380"/>
</dbReference>
<dbReference type="GeneID" id="7896087"/>
<dbReference type="KEGG" id="tgo:TGME49_309380"/>
<dbReference type="VEuPathDB" id="ToxoDB:TGME49_309380"/>
<dbReference type="OrthoDB" id="199063at2759"/>
<dbReference type="PhylomeDB" id="S8EV69"/>
<dbReference type="Proteomes" id="UP000001529">
    <property type="component" value="Chromosome XI"/>
</dbReference>
<dbReference type="GO" id="GO:0031262">
    <property type="term" value="C:Ndc80 complex"/>
    <property type="evidence" value="ECO:0007669"/>
    <property type="project" value="InterPro"/>
</dbReference>
<dbReference type="GO" id="GO:0051301">
    <property type="term" value="P:cell division"/>
    <property type="evidence" value="ECO:0007669"/>
    <property type="project" value="UniProtKB-KW"/>
</dbReference>
<dbReference type="Gene3D" id="1.10.418.60">
    <property type="entry name" value="Ncd80 complex, Nuf2 subunit"/>
    <property type="match status" value="1"/>
</dbReference>
<dbReference type="InterPro" id="IPR005549">
    <property type="entry name" value="Kinetochore_Nuf2_N"/>
</dbReference>
<dbReference type="InterPro" id="IPR038275">
    <property type="entry name" value="Nuf2_N_sf"/>
</dbReference>
<dbReference type="Pfam" id="PF03800">
    <property type="entry name" value="Nuf2"/>
    <property type="match status" value="1"/>
</dbReference>
<accession>S8EV69</accession>
<name>NUF2_TOXGM</name>
<comment type="function">
    <text evidence="2 3">Required for anchoring centrosomal cores to the nuclear periphery (PubMed:30865554). Plays a role in chromosome segregation but is dispensable for centromere clustering (PubMed:24015880).</text>
</comment>
<comment type="subcellular location">
    <subcellularLocation>
        <location evidence="2">Chromosome</location>
        <location evidence="2">Centromere</location>
        <location evidence="2">Kinetochore</location>
    </subcellularLocation>
    <text evidence="2">Co-localizes with NDC80 throughout the cell cycle.</text>
</comment>
<comment type="disruption phenotype">
    <text evidence="2 3">Conditional knockdown results in parasite inability to form plaques, indicating an essential role for parasite survival (PubMed:24015880). Dissociation of centrosomes from the nucleus (PubMed:30865554). Increase in centrosome inner and outer core dissociation (PubMed:30865554). Disappearance of NDC80 from the kinetochore (PubMed:24015880). Nuclei segregation defects (PubMed:24015880). Chromosome segregation defects (PubMed:24015880). No significant effects on centromere clustering (PubMed:24015880). No significant effects on apicoplast segregation (PubMed:24015880).</text>
</comment>
<comment type="similarity">
    <text evidence="6">Belongs to the NUF2 family.</text>
</comment>
<proteinExistence type="evidence at protein level"/>
<gene>
    <name evidence="6" type="primary">NUF2</name>
    <name evidence="7" type="ORF">TGME49_309380</name>
</gene>
<reference evidence="8" key="1">
    <citation type="submission" date="2013-04" db="EMBL/GenBank/DDBJ databases">
        <authorList>
            <person name="Sibley D."/>
            <person name="Venepally P."/>
            <person name="Karamycheva S."/>
            <person name="Hadjithomas M."/>
            <person name="Khan A."/>
            <person name="Brunk B."/>
            <person name="Roos D."/>
            <person name="Caler E."/>
            <person name="Lorenzi H."/>
        </authorList>
    </citation>
    <scope>NUCLEOTIDE SEQUENCE [LARGE SCALE GENOMIC DNA]</scope>
    <source>
        <strain evidence="8">ATCC 50611 / Me49</strain>
    </source>
</reference>
<reference evidence="6" key="2">
    <citation type="journal article" date="2014" name="Cell. Microbiol.">
        <title>The Toxoplasma gondii kinetochore is required for centrosome association with the centrocone (spindle pole).</title>
        <authorList>
            <person name="Farrell M."/>
            <person name="Gubbels M.J."/>
        </authorList>
    </citation>
    <scope>FUNCTION</scope>
    <scope>SUBCELLULAR LOCATION</scope>
    <scope>DISRUPTION PHENOTYPE</scope>
    <scope>REGION REQUIRED FOR NUCLEAR LOCALIZATION</scope>
    <scope>MUTAGENESIS OF 121-ILE--ARG-125</scope>
</reference>
<reference evidence="6" key="3">
    <citation type="journal article" date="2019" name="Mol. Biol. Cell">
        <title>TgCep250 is dynamically processed through the division cycle and is essential for structural integrity of the Toxoplasma centrosome.</title>
        <authorList>
            <person name="Chen C.T."/>
            <person name="Gubbels M.J."/>
        </authorList>
    </citation>
    <scope>FUNCTION</scope>
    <scope>DISRUPTION PHENOTYPE</scope>
</reference>
<protein>
    <recommendedName>
        <fullName evidence="6">Kinetochore protein NUF2</fullName>
        <shortName evidence="4 5">TgNuf2</shortName>
    </recommendedName>
</protein>
<keyword id="KW-0131">Cell cycle</keyword>
<keyword id="KW-0132">Cell division</keyword>
<keyword id="KW-0137">Centromere</keyword>
<keyword id="KW-0158">Chromosome</keyword>
<keyword id="KW-0175">Coiled coil</keyword>
<keyword id="KW-0995">Kinetochore</keyword>
<keyword id="KW-0498">Mitosis</keyword>
<keyword id="KW-1185">Reference proteome</keyword>